<evidence type="ECO:0000255" key="1">
    <source>
        <dbReference type="HAMAP-Rule" id="MF_00293"/>
    </source>
</evidence>
<proteinExistence type="inferred from homology"/>
<organism>
    <name type="scientific">Tetradesmus obliquus</name>
    <name type="common">Green alga</name>
    <name type="synonym">Acutodesmus obliquus</name>
    <dbReference type="NCBI Taxonomy" id="3088"/>
    <lineage>
        <taxon>Eukaryota</taxon>
        <taxon>Viridiplantae</taxon>
        <taxon>Chlorophyta</taxon>
        <taxon>core chlorophytes</taxon>
        <taxon>Chlorophyceae</taxon>
        <taxon>CS clade</taxon>
        <taxon>Sphaeropleales</taxon>
        <taxon>Scenedesmaceae</taxon>
        <taxon>Tetradesmus</taxon>
    </lineage>
</organism>
<protein>
    <recommendedName>
        <fullName evidence="1">Protein PsbN</fullName>
    </recommendedName>
</protein>
<keyword id="KW-0150">Chloroplast</keyword>
<keyword id="KW-0472">Membrane</keyword>
<keyword id="KW-0934">Plastid</keyword>
<keyword id="KW-0793">Thylakoid</keyword>
<keyword id="KW-0812">Transmembrane</keyword>
<keyword id="KW-1133">Transmembrane helix</keyword>
<feature type="chain" id="PRO_0000276280" description="Protein PsbN">
    <location>
        <begin position="1"/>
        <end position="44"/>
    </location>
</feature>
<feature type="transmembrane region" description="Helical" evidence="1">
    <location>
        <begin position="6"/>
        <end position="26"/>
    </location>
</feature>
<gene>
    <name evidence="1" type="primary">psbN</name>
</gene>
<comment type="function">
    <text evidence="1">May play a role in photosystem I and II biogenesis.</text>
</comment>
<comment type="subcellular location">
    <subcellularLocation>
        <location evidence="1">Plastid</location>
        <location evidence="1">Chloroplast thylakoid membrane</location>
        <topology evidence="1">Single-pass membrane protein</topology>
    </subcellularLocation>
</comment>
<comment type="similarity">
    <text evidence="1">Belongs to the PsbN family.</text>
</comment>
<comment type="caution">
    <text evidence="1">Originally thought to be a component of PSII; based on experiments in Synechocystis, N.tabacum and barley, and its absence from PSII in T.elongatus and T.vulcanus, this is probably not true.</text>
</comment>
<accession>Q1KVV4</accession>
<name>PSBN_TETOB</name>
<sequence>MDSPAFFFTFFLWFLLLSATGYSIYVSFGPPSKKLRDPFEEHED</sequence>
<geneLocation type="chloroplast"/>
<reference key="1">
    <citation type="journal article" date="2006" name="BMC Evol. Biol.">
        <title>The complete chloroplast genome sequence of the chlorophycean green alga Scenedesmus obliquus reveals a compact gene organization and a biased distribution of genes on the two DNA strands.</title>
        <authorList>
            <person name="de Cambiaire J.-C."/>
            <person name="Otis C."/>
            <person name="Lemieux C."/>
            <person name="Turmel M."/>
        </authorList>
    </citation>
    <scope>NUCLEOTIDE SEQUENCE [LARGE SCALE GENOMIC DNA]</scope>
    <source>
        <strain>UTEX 393</strain>
    </source>
</reference>
<dbReference type="EMBL" id="DQ396875">
    <property type="protein sequence ID" value="ABD48253.1"/>
    <property type="molecule type" value="Genomic_DNA"/>
</dbReference>
<dbReference type="RefSeq" id="YP_635970.1">
    <property type="nucleotide sequence ID" value="NC_008101.1"/>
</dbReference>
<dbReference type="SMR" id="Q1KVV4"/>
<dbReference type="GeneID" id="4099830"/>
<dbReference type="GO" id="GO:0009535">
    <property type="term" value="C:chloroplast thylakoid membrane"/>
    <property type="evidence" value="ECO:0007669"/>
    <property type="project" value="UniProtKB-SubCell"/>
</dbReference>
<dbReference type="GO" id="GO:0015979">
    <property type="term" value="P:photosynthesis"/>
    <property type="evidence" value="ECO:0007669"/>
    <property type="project" value="InterPro"/>
</dbReference>
<dbReference type="HAMAP" id="MF_00293">
    <property type="entry name" value="PSII_PsbN"/>
    <property type="match status" value="1"/>
</dbReference>
<dbReference type="InterPro" id="IPR003398">
    <property type="entry name" value="PSII_PsbN"/>
</dbReference>
<dbReference type="PANTHER" id="PTHR35326">
    <property type="entry name" value="PROTEIN PSBN"/>
    <property type="match status" value="1"/>
</dbReference>
<dbReference type="PANTHER" id="PTHR35326:SF3">
    <property type="entry name" value="PROTEIN PSBN"/>
    <property type="match status" value="1"/>
</dbReference>
<dbReference type="Pfam" id="PF02468">
    <property type="entry name" value="PsbN"/>
    <property type="match status" value="1"/>
</dbReference>